<comment type="catalytic activity">
    <reaction evidence="1">
        <text>agmatine + H2O = N-carbamoylputrescine + NH4(+)</text>
        <dbReference type="Rhea" id="RHEA:18037"/>
        <dbReference type="ChEBI" id="CHEBI:15377"/>
        <dbReference type="ChEBI" id="CHEBI:28938"/>
        <dbReference type="ChEBI" id="CHEBI:58145"/>
        <dbReference type="ChEBI" id="CHEBI:58318"/>
        <dbReference type="EC" id="3.5.3.12"/>
    </reaction>
</comment>
<comment type="similarity">
    <text evidence="1">Belongs to the agmatine deiminase family.</text>
</comment>
<protein>
    <recommendedName>
        <fullName evidence="1">Putative agmatine deiminase</fullName>
        <ecNumber evidence="1">3.5.3.12</ecNumber>
    </recommendedName>
    <alternativeName>
        <fullName evidence="1">Agmatine iminohydrolase</fullName>
    </alternativeName>
</protein>
<feature type="chain" id="PRO_1000070558" description="Putative agmatine deiminase">
    <location>
        <begin position="1"/>
        <end position="364"/>
    </location>
</feature>
<feature type="active site" description="Amidino-cysteine intermediate" evidence="1">
    <location>
        <position position="355"/>
    </location>
</feature>
<reference key="1">
    <citation type="submission" date="2005-09" db="EMBL/GenBank/DDBJ databases">
        <authorList>
            <person name="Glass J.I."/>
            <person name="Lartigue C."/>
            <person name="Pfannkoch C."/>
            <person name="Baden-Tillson H."/>
            <person name="Smith H.O."/>
            <person name="Venter J.C."/>
            <person name="Roske K."/>
            <person name="Wise K.S."/>
            <person name="Calcutt M.J."/>
            <person name="Nelson W.C."/>
            <person name="Nierman W.C."/>
        </authorList>
    </citation>
    <scope>NUCLEOTIDE SEQUENCE [LARGE SCALE GENOMIC DNA]</scope>
    <source>
        <strain>California kid / ATCC 27343 / NCTC 10154</strain>
    </source>
</reference>
<dbReference type="EC" id="3.5.3.12" evidence="1"/>
<dbReference type="EMBL" id="CP000123">
    <property type="protein sequence ID" value="ABC01526.1"/>
    <property type="molecule type" value="Genomic_DNA"/>
</dbReference>
<dbReference type="RefSeq" id="WP_011387513.1">
    <property type="nucleotide sequence ID" value="NC_007633.1"/>
</dbReference>
<dbReference type="SMR" id="Q2SRJ6"/>
<dbReference type="GeneID" id="23778393"/>
<dbReference type="KEGG" id="mcp:MCAP_0652"/>
<dbReference type="HOGENOM" id="CLU_037682_1_0_14"/>
<dbReference type="PhylomeDB" id="Q2SRJ6"/>
<dbReference type="Proteomes" id="UP000001928">
    <property type="component" value="Chromosome"/>
</dbReference>
<dbReference type="GO" id="GO:0047632">
    <property type="term" value="F:agmatine deiminase activity"/>
    <property type="evidence" value="ECO:0007669"/>
    <property type="project" value="UniProtKB-UniRule"/>
</dbReference>
<dbReference type="GO" id="GO:0004668">
    <property type="term" value="F:protein-arginine deiminase activity"/>
    <property type="evidence" value="ECO:0007669"/>
    <property type="project" value="InterPro"/>
</dbReference>
<dbReference type="GO" id="GO:0009446">
    <property type="term" value="P:putrescine biosynthetic process"/>
    <property type="evidence" value="ECO:0007669"/>
    <property type="project" value="InterPro"/>
</dbReference>
<dbReference type="Gene3D" id="3.75.10.10">
    <property type="entry name" value="L-arginine/glycine Amidinotransferase, Chain A"/>
    <property type="match status" value="1"/>
</dbReference>
<dbReference type="HAMAP" id="MF_01841">
    <property type="entry name" value="Agmatine_deimin"/>
    <property type="match status" value="1"/>
</dbReference>
<dbReference type="InterPro" id="IPR017754">
    <property type="entry name" value="Agmatine_deiminase"/>
</dbReference>
<dbReference type="InterPro" id="IPR007466">
    <property type="entry name" value="Peptidyl-Arg-deiminase_porph"/>
</dbReference>
<dbReference type="NCBIfam" id="TIGR03380">
    <property type="entry name" value="agmatine_aguA"/>
    <property type="match status" value="1"/>
</dbReference>
<dbReference type="NCBIfam" id="NF010070">
    <property type="entry name" value="PRK13551.1"/>
    <property type="match status" value="1"/>
</dbReference>
<dbReference type="PANTHER" id="PTHR31377">
    <property type="entry name" value="AGMATINE DEIMINASE-RELATED"/>
    <property type="match status" value="1"/>
</dbReference>
<dbReference type="PANTHER" id="PTHR31377:SF0">
    <property type="entry name" value="AGMATINE DEIMINASE-RELATED"/>
    <property type="match status" value="1"/>
</dbReference>
<dbReference type="Pfam" id="PF04371">
    <property type="entry name" value="PAD_porph"/>
    <property type="match status" value="1"/>
</dbReference>
<dbReference type="SUPFAM" id="SSF55909">
    <property type="entry name" value="Pentein"/>
    <property type="match status" value="1"/>
</dbReference>
<keyword id="KW-0378">Hydrolase</keyword>
<gene>
    <name evidence="1" type="primary">aguA</name>
    <name type="ordered locus">MCAP_0652</name>
</gene>
<name>AGUA_MYCCT</name>
<sequence>MSKKMNSTPKKDGFWMPGEWEKHDQCWMIWPERSDNWRLGAKPAQRVFANVANAIAKYEKVTMLVSHQQFENARNLLDQNVRVIECSNDDSWMRDVGPTIVKNKDGEIRGVDWVFNAWGGFKGGLYFPWDKDDAIARKVCEISNIDYYRTDFVLEGGSIHTDGDGTLYTTEECLLNENRNPDLSKEQIEENLKEYCGVEKVIWLPLGVYNDETNGHVDNLLHVVSPGHVVLTWTDDTTDPQYERSKLAYDILTNTLDAKGRKIKVTKLHQPGPLFITKEEAEGIDVCDTMSREPEQRMPASYANFYIANNAIILPIFGDKYDDLAVKTLQSVYPNHKIETVMAREILLGGGNIHCITQQQPTTK</sequence>
<accession>Q2SRJ6</accession>
<evidence type="ECO:0000255" key="1">
    <source>
        <dbReference type="HAMAP-Rule" id="MF_01841"/>
    </source>
</evidence>
<organism>
    <name type="scientific">Mycoplasma capricolum subsp. capricolum (strain California kid / ATCC 27343 / NCTC 10154)</name>
    <dbReference type="NCBI Taxonomy" id="340047"/>
    <lineage>
        <taxon>Bacteria</taxon>
        <taxon>Bacillati</taxon>
        <taxon>Mycoplasmatota</taxon>
        <taxon>Mollicutes</taxon>
        <taxon>Mycoplasmataceae</taxon>
        <taxon>Mycoplasma</taxon>
    </lineage>
</organism>
<proteinExistence type="inferred from homology"/>